<keyword id="KW-0067">ATP-binding</keyword>
<keyword id="KW-0436">Ligase</keyword>
<keyword id="KW-0547">Nucleotide-binding</keyword>
<gene>
    <name type="primary">AIM22</name>
    <name type="ORF">SCY_2892</name>
</gene>
<organism>
    <name type="scientific">Saccharomyces cerevisiae (strain YJM789)</name>
    <name type="common">Baker's yeast</name>
    <dbReference type="NCBI Taxonomy" id="307796"/>
    <lineage>
        <taxon>Eukaryota</taxon>
        <taxon>Fungi</taxon>
        <taxon>Dikarya</taxon>
        <taxon>Ascomycota</taxon>
        <taxon>Saccharomycotina</taxon>
        <taxon>Saccharomycetes</taxon>
        <taxon>Saccharomycetales</taxon>
        <taxon>Saccharomycetaceae</taxon>
        <taxon>Saccharomyces</taxon>
    </lineage>
</organism>
<reference key="1">
    <citation type="journal article" date="2007" name="Proc. Natl. Acad. Sci. U.S.A.">
        <title>Genome sequencing and comparative analysis of Saccharomyces cerevisiae strain YJM789.</title>
        <authorList>
            <person name="Wei W."/>
            <person name="McCusker J.H."/>
            <person name="Hyman R.W."/>
            <person name="Jones T."/>
            <person name="Ning Y."/>
            <person name="Cao Z."/>
            <person name="Gu Z."/>
            <person name="Bruno D."/>
            <person name="Miranda M."/>
            <person name="Nguyen M."/>
            <person name="Wilhelmy J."/>
            <person name="Komp C."/>
            <person name="Tamse R."/>
            <person name="Wang X."/>
            <person name="Jia P."/>
            <person name="Luedi P."/>
            <person name="Oefner P.J."/>
            <person name="David L."/>
            <person name="Dietrich F.S."/>
            <person name="Li Y."/>
            <person name="Davis R.W."/>
            <person name="Steinmetz L.M."/>
        </authorList>
    </citation>
    <scope>NUCLEOTIDE SEQUENCE [LARGE SCALE GENOMIC DNA]</scope>
    <source>
        <strain>YJM789</strain>
    </source>
</reference>
<sequence length="409" mass="47045">MSMMLSNWALSPRYVGQRNLIHCTTLFHTLTRWAKDADDKYHDINLMYENMFTPSNDNVSILQDEGKSDYDTTKTSSMQEDISAFNKDLYNFYNIGYAKQIMSASQLENIVKAKGRFVIQSLSTSPYYNLALENYVFKNTPRAKRGPDNCRLVFYINDRCAVIGKNQNLWQEVDLAKLKSKNFELLRRFSGGGTVLHDLGNVNYSYLTSREKFETKFFNKMIIKWLNSLNPELRLDLNERGDIIQDGFKISGSAYKIAGGKAYHHATMLLNADLEQFSGLLEPSLPNNMEWESSGVHSVKSKIKNVGIITPNQFIAVVSERFQKTFKVDGEIPIYYCDEFKSINDEIKDAMNTLQSEQWKYFSGPKFSVKIKDKGLTIKVEKGMIYDCDRNDLIGLEFKGFLENIDSYT</sequence>
<evidence type="ECO:0000250" key="1"/>
<evidence type="ECO:0000255" key="2">
    <source>
        <dbReference type="PROSITE-ProRule" id="PRU01067"/>
    </source>
</evidence>
<evidence type="ECO:0000305" key="3"/>
<accession>A6ZPT1</accession>
<dbReference type="EC" id="6.3.1.20"/>
<dbReference type="EMBL" id="AAFW02000040">
    <property type="protein sequence ID" value="EDN63291.1"/>
    <property type="status" value="ALT_INIT"/>
    <property type="molecule type" value="Genomic_DNA"/>
</dbReference>
<dbReference type="SMR" id="A6ZPT1"/>
<dbReference type="HOGENOM" id="CLU_022986_2_0_1"/>
<dbReference type="OrthoDB" id="34795at4893"/>
<dbReference type="UniPathway" id="UPA00537">
    <property type="reaction ID" value="UER00594"/>
</dbReference>
<dbReference type="UniPathway" id="UPA00537">
    <property type="reaction ID" value="UER00595"/>
</dbReference>
<dbReference type="Proteomes" id="UP000007060">
    <property type="component" value="Unassembled WGS sequence"/>
</dbReference>
<dbReference type="GO" id="GO:0005739">
    <property type="term" value="C:mitochondrion"/>
    <property type="evidence" value="ECO:0007669"/>
    <property type="project" value="TreeGrafter"/>
</dbReference>
<dbReference type="GO" id="GO:0005524">
    <property type="term" value="F:ATP binding"/>
    <property type="evidence" value="ECO:0007669"/>
    <property type="project" value="UniProtKB-KW"/>
</dbReference>
<dbReference type="GO" id="GO:0016979">
    <property type="term" value="F:lipoate-protein ligase activity"/>
    <property type="evidence" value="ECO:0007669"/>
    <property type="project" value="UniProtKB-EC"/>
</dbReference>
<dbReference type="GO" id="GO:0017118">
    <property type="term" value="F:lipoyltransferase activity"/>
    <property type="evidence" value="ECO:0007669"/>
    <property type="project" value="TreeGrafter"/>
</dbReference>
<dbReference type="GO" id="GO:0036211">
    <property type="term" value="P:protein modification process"/>
    <property type="evidence" value="ECO:0007669"/>
    <property type="project" value="InterPro"/>
</dbReference>
<dbReference type="CDD" id="cd16443">
    <property type="entry name" value="LplA"/>
    <property type="match status" value="1"/>
</dbReference>
<dbReference type="FunFam" id="3.30.930.10:FF:000107">
    <property type="entry name" value="Putative lipoate-protein ligase A"/>
    <property type="match status" value="1"/>
</dbReference>
<dbReference type="Gene3D" id="3.30.930.10">
    <property type="entry name" value="Bira Bifunctional Protein, Domain 2"/>
    <property type="match status" value="1"/>
</dbReference>
<dbReference type="InterPro" id="IPR045864">
    <property type="entry name" value="aa-tRNA-synth_II/BPL/LPL"/>
</dbReference>
<dbReference type="InterPro" id="IPR004143">
    <property type="entry name" value="BPL_LPL_catalytic"/>
</dbReference>
<dbReference type="InterPro" id="IPR004562">
    <property type="entry name" value="LipoylTrfase_LipoateP_Ligase"/>
</dbReference>
<dbReference type="NCBIfam" id="TIGR00545">
    <property type="entry name" value="lipoyltrans"/>
    <property type="match status" value="1"/>
</dbReference>
<dbReference type="PANTHER" id="PTHR12561">
    <property type="entry name" value="LIPOATE-PROTEIN LIGASE"/>
    <property type="match status" value="1"/>
</dbReference>
<dbReference type="PANTHER" id="PTHR12561:SF3">
    <property type="entry name" value="LIPOYLTRANSFERASE 1, MITOCHONDRIAL"/>
    <property type="match status" value="1"/>
</dbReference>
<dbReference type="Pfam" id="PF21948">
    <property type="entry name" value="LplA-B_cat"/>
    <property type="match status" value="1"/>
</dbReference>
<dbReference type="SUPFAM" id="SSF55681">
    <property type="entry name" value="Class II aaRS and biotin synthetases"/>
    <property type="match status" value="1"/>
</dbReference>
<dbReference type="PROSITE" id="PS51733">
    <property type="entry name" value="BPL_LPL_CATALYTIC"/>
    <property type="match status" value="1"/>
</dbReference>
<name>LPLA_YEAS7</name>
<comment type="function">
    <text evidence="1">Catalyzes both the ATP-dependent activation of exogenously supplied lipoate to lipoyl-AMP and the transfer of the activated lipoyl onto the lipoyl domains of lipoate-dependent enzymes.</text>
</comment>
<comment type="catalytic activity">
    <reaction>
        <text>L-lysyl-[lipoyl-carrier protein] + (R)-lipoate + ATP = N(6)-[(R)-lipoyl]-L-lysyl-[lipoyl-carrier protein] + AMP + diphosphate + H(+)</text>
        <dbReference type="Rhea" id="RHEA:49288"/>
        <dbReference type="Rhea" id="RHEA-COMP:10500"/>
        <dbReference type="Rhea" id="RHEA-COMP:10502"/>
        <dbReference type="ChEBI" id="CHEBI:15378"/>
        <dbReference type="ChEBI" id="CHEBI:29969"/>
        <dbReference type="ChEBI" id="CHEBI:30616"/>
        <dbReference type="ChEBI" id="CHEBI:33019"/>
        <dbReference type="ChEBI" id="CHEBI:83088"/>
        <dbReference type="ChEBI" id="CHEBI:83099"/>
        <dbReference type="ChEBI" id="CHEBI:456215"/>
        <dbReference type="EC" id="6.3.1.20"/>
    </reaction>
</comment>
<comment type="pathway">
    <text>Protein modification; protein lipoylation via exogenous pathway; protein N(6)-(lipoyl)lysine from lipoate: step 1/2.</text>
</comment>
<comment type="pathway">
    <text>Protein modification; protein lipoylation via exogenous pathway; protein N(6)-(lipoyl)lysine from lipoate: step 2/2.</text>
</comment>
<comment type="subunit">
    <text evidence="1">Monomer.</text>
</comment>
<comment type="miscellaneous">
    <text evidence="1">In the transfer reaction, the free carboxyl group of lipoic acid is attached via an amide linkage to the epsilon-amino group of a specific lysine residue of lipoyl domains of lipoate-dependent enzymes.</text>
</comment>
<comment type="similarity">
    <text evidence="3">Belongs to the LplA family.</text>
</comment>
<comment type="sequence caution" evidence="3">
    <conflict type="erroneous initiation">
        <sequence resource="EMBL-CDS" id="EDN63291"/>
    </conflict>
</comment>
<protein>
    <recommendedName>
        <fullName>Putative lipoate-protein ligase A</fullName>
        <ecNumber>6.3.1.20</ecNumber>
    </recommendedName>
    <alternativeName>
        <fullName>Altered inheritance rate of mitochondria protein 22</fullName>
    </alternativeName>
</protein>
<proteinExistence type="inferred from homology"/>
<feature type="chain" id="PRO_0000377670" description="Putative lipoate-protein ligase A">
    <location>
        <begin position="1"/>
        <end position="409"/>
    </location>
</feature>
<feature type="domain" description="BPL/LPL catalytic" evidence="2">
    <location>
        <begin position="146"/>
        <end position="330"/>
    </location>
</feature>
<feature type="binding site" evidence="1">
    <location>
        <position position="188"/>
    </location>
    <ligand>
        <name>ATP</name>
        <dbReference type="ChEBI" id="CHEBI:30616"/>
    </ligand>
</feature>
<feature type="binding site" evidence="1">
    <location>
        <begin position="193"/>
        <end position="196"/>
    </location>
    <ligand>
        <name>ATP</name>
        <dbReference type="ChEBI" id="CHEBI:30616"/>
    </ligand>
</feature>
<feature type="binding site" evidence="1">
    <location>
        <position position="249"/>
    </location>
    <ligand>
        <name>(R)-lipoate</name>
        <dbReference type="ChEBI" id="CHEBI:83088"/>
    </ligand>
</feature>
<feature type="binding site" evidence="1">
    <location>
        <position position="249"/>
    </location>
    <ligand>
        <name>ATP</name>
        <dbReference type="ChEBI" id="CHEBI:30616"/>
    </ligand>
</feature>